<comment type="similarity">
    <text evidence="1 2">Belongs to the jacalin lectin family.</text>
</comment>
<evidence type="ECO:0000255" key="1">
    <source>
        <dbReference type="PROSITE-ProRule" id="PRU01088"/>
    </source>
</evidence>
<evidence type="ECO:0000305" key="2"/>
<dbReference type="EMBL" id="AC009999">
    <property type="protein sequence ID" value="AAF29383.1"/>
    <property type="molecule type" value="Genomic_DNA"/>
</dbReference>
<dbReference type="EMBL" id="CP002684">
    <property type="protein sequence ID" value="AEE27889.1"/>
    <property type="molecule type" value="Genomic_DNA"/>
</dbReference>
<dbReference type="PIR" id="B86192">
    <property type="entry name" value="B86192"/>
</dbReference>
<dbReference type="RefSeq" id="NP_172068.1">
    <property type="nucleotide sequence ID" value="NM_100457.4"/>
</dbReference>
<dbReference type="SMR" id="Q9MA49"/>
<dbReference type="FunCoup" id="Q9MA49">
    <property type="interactions" value="16"/>
</dbReference>
<dbReference type="STRING" id="3702.Q9MA49"/>
<dbReference type="PaxDb" id="3702-AT1G05770.1"/>
<dbReference type="ProteomicsDB" id="250659"/>
<dbReference type="EnsemblPlants" id="AT1G05770.1">
    <property type="protein sequence ID" value="AT1G05770.1"/>
    <property type="gene ID" value="AT1G05770"/>
</dbReference>
<dbReference type="GeneID" id="837085"/>
<dbReference type="Gramene" id="AT1G05770.1">
    <property type="protein sequence ID" value="AT1G05770.1"/>
    <property type="gene ID" value="AT1G05770"/>
</dbReference>
<dbReference type="KEGG" id="ath:AT1G05770"/>
<dbReference type="Araport" id="AT1G05770"/>
<dbReference type="TAIR" id="AT1G05770"/>
<dbReference type="eggNOG" id="ENOG502S91T">
    <property type="taxonomic scope" value="Eukaryota"/>
</dbReference>
<dbReference type="HOGENOM" id="CLU_076205_1_0_1"/>
<dbReference type="InParanoid" id="Q9MA49"/>
<dbReference type="OMA" id="NQREDYC"/>
<dbReference type="PhylomeDB" id="Q9MA49"/>
<dbReference type="PRO" id="PR:Q9MA49"/>
<dbReference type="Proteomes" id="UP000006548">
    <property type="component" value="Chromosome 1"/>
</dbReference>
<dbReference type="ExpressionAtlas" id="Q9MA49">
    <property type="expression patterns" value="baseline and differential"/>
</dbReference>
<dbReference type="GO" id="GO:0030246">
    <property type="term" value="F:carbohydrate binding"/>
    <property type="evidence" value="ECO:0007669"/>
    <property type="project" value="UniProtKB-KW"/>
</dbReference>
<dbReference type="Gene3D" id="2.100.10.30">
    <property type="entry name" value="Jacalin-like lectin domain"/>
    <property type="match status" value="1"/>
</dbReference>
<dbReference type="InterPro" id="IPR001229">
    <property type="entry name" value="Jacalin-like_lectin_dom"/>
</dbReference>
<dbReference type="InterPro" id="IPR036404">
    <property type="entry name" value="Jacalin-like_lectin_dom_sf"/>
</dbReference>
<dbReference type="PANTHER" id="PTHR47293:SF80">
    <property type="entry name" value="JACALIN-RELATED LECTIN 2-RELATED"/>
    <property type="match status" value="1"/>
</dbReference>
<dbReference type="PANTHER" id="PTHR47293">
    <property type="entry name" value="JACALIN-RELATED LECTIN 3"/>
    <property type="match status" value="1"/>
</dbReference>
<dbReference type="Pfam" id="PF01419">
    <property type="entry name" value="Jacalin"/>
    <property type="match status" value="1"/>
</dbReference>
<dbReference type="SMART" id="SM00915">
    <property type="entry name" value="Jacalin"/>
    <property type="match status" value="1"/>
</dbReference>
<dbReference type="SUPFAM" id="SSF51101">
    <property type="entry name" value="Mannose-binding lectins"/>
    <property type="match status" value="1"/>
</dbReference>
<dbReference type="PROSITE" id="PS51752">
    <property type="entry name" value="JACALIN_LECTIN"/>
    <property type="match status" value="1"/>
</dbReference>
<reference key="1">
    <citation type="journal article" date="2000" name="Nature">
        <title>Sequence and analysis of chromosome 1 of the plant Arabidopsis thaliana.</title>
        <authorList>
            <person name="Theologis A."/>
            <person name="Ecker J.R."/>
            <person name="Palm C.J."/>
            <person name="Federspiel N.A."/>
            <person name="Kaul S."/>
            <person name="White O."/>
            <person name="Alonso J."/>
            <person name="Altafi H."/>
            <person name="Araujo R."/>
            <person name="Bowman C.L."/>
            <person name="Brooks S.Y."/>
            <person name="Buehler E."/>
            <person name="Chan A."/>
            <person name="Chao Q."/>
            <person name="Chen H."/>
            <person name="Cheuk R.F."/>
            <person name="Chin C.W."/>
            <person name="Chung M.K."/>
            <person name="Conn L."/>
            <person name="Conway A.B."/>
            <person name="Conway A.R."/>
            <person name="Creasy T.H."/>
            <person name="Dewar K."/>
            <person name="Dunn P."/>
            <person name="Etgu P."/>
            <person name="Feldblyum T.V."/>
            <person name="Feng J.-D."/>
            <person name="Fong B."/>
            <person name="Fujii C.Y."/>
            <person name="Gill J.E."/>
            <person name="Goldsmith A.D."/>
            <person name="Haas B."/>
            <person name="Hansen N.F."/>
            <person name="Hughes B."/>
            <person name="Huizar L."/>
            <person name="Hunter J.L."/>
            <person name="Jenkins J."/>
            <person name="Johnson-Hopson C."/>
            <person name="Khan S."/>
            <person name="Khaykin E."/>
            <person name="Kim C.J."/>
            <person name="Koo H.L."/>
            <person name="Kremenetskaia I."/>
            <person name="Kurtz D.B."/>
            <person name="Kwan A."/>
            <person name="Lam B."/>
            <person name="Langin-Hooper S."/>
            <person name="Lee A."/>
            <person name="Lee J.M."/>
            <person name="Lenz C.A."/>
            <person name="Li J.H."/>
            <person name="Li Y.-P."/>
            <person name="Lin X."/>
            <person name="Liu S.X."/>
            <person name="Liu Z.A."/>
            <person name="Luros J.S."/>
            <person name="Maiti R."/>
            <person name="Marziali A."/>
            <person name="Militscher J."/>
            <person name="Miranda M."/>
            <person name="Nguyen M."/>
            <person name="Nierman W.C."/>
            <person name="Osborne B.I."/>
            <person name="Pai G."/>
            <person name="Peterson J."/>
            <person name="Pham P.K."/>
            <person name="Rizzo M."/>
            <person name="Rooney T."/>
            <person name="Rowley D."/>
            <person name="Sakano H."/>
            <person name="Salzberg S.L."/>
            <person name="Schwartz J.R."/>
            <person name="Shinn P."/>
            <person name="Southwick A.M."/>
            <person name="Sun H."/>
            <person name="Tallon L.J."/>
            <person name="Tambunga G."/>
            <person name="Toriumi M.J."/>
            <person name="Town C.D."/>
            <person name="Utterback T."/>
            <person name="Van Aken S."/>
            <person name="Vaysberg M."/>
            <person name="Vysotskaia V.S."/>
            <person name="Walker M."/>
            <person name="Wu D."/>
            <person name="Yu G."/>
            <person name="Fraser C.M."/>
            <person name="Venter J.C."/>
            <person name="Davis R.W."/>
        </authorList>
    </citation>
    <scope>NUCLEOTIDE SEQUENCE [LARGE SCALE GENOMIC DNA]</scope>
    <source>
        <strain>cv. Columbia</strain>
    </source>
</reference>
<reference key="2">
    <citation type="journal article" date="2017" name="Plant J.">
        <title>Araport11: a complete reannotation of the Arabidopsis thaliana reference genome.</title>
        <authorList>
            <person name="Cheng C.Y."/>
            <person name="Krishnakumar V."/>
            <person name="Chan A.P."/>
            <person name="Thibaud-Nissen F."/>
            <person name="Schobel S."/>
            <person name="Town C.D."/>
        </authorList>
    </citation>
    <scope>GENOME REANNOTATION</scope>
    <source>
        <strain>cv. Columbia</strain>
    </source>
</reference>
<reference key="3">
    <citation type="journal article" date="2008" name="Plant Cell Physiol.">
        <title>Antagonistic jacalin-related lectins regulate the size of ER body-type beta-glucosidase complexes in Arabidopsis thaliana.</title>
        <authorList>
            <person name="Nagano A.J."/>
            <person name="Fukao Y."/>
            <person name="Fujiwara M."/>
            <person name="Nishimura M."/>
            <person name="Hara-Nishimura I."/>
        </authorList>
    </citation>
    <scope>GENE FAMILY</scope>
    <scope>NOMENCLATURE</scope>
</reference>
<gene>
    <name type="primary">JAL2</name>
    <name type="ordered locus">At1g05770</name>
    <name type="ORF">T20M3.3</name>
</gene>
<feature type="chain" id="PRO_0000430369" description="Jacalin-related lectin 2">
    <location>
        <begin position="1"/>
        <end position="184"/>
    </location>
</feature>
<feature type="domain" description="Jacalin-type lectin" evidence="1">
    <location>
        <begin position="4"/>
        <end position="163"/>
    </location>
</feature>
<organism>
    <name type="scientific">Arabidopsis thaliana</name>
    <name type="common">Mouse-ear cress</name>
    <dbReference type="NCBI Taxonomy" id="3702"/>
    <lineage>
        <taxon>Eukaryota</taxon>
        <taxon>Viridiplantae</taxon>
        <taxon>Streptophyta</taxon>
        <taxon>Embryophyta</taxon>
        <taxon>Tracheophyta</taxon>
        <taxon>Spermatophyta</taxon>
        <taxon>Magnoliopsida</taxon>
        <taxon>eudicotyledons</taxon>
        <taxon>Gunneridae</taxon>
        <taxon>Pentapetalae</taxon>
        <taxon>rosids</taxon>
        <taxon>malvids</taxon>
        <taxon>Brassicales</taxon>
        <taxon>Brassicaceae</taxon>
        <taxon>Camelineae</taxon>
        <taxon>Arabidopsis</taxon>
    </lineage>
</organism>
<protein>
    <recommendedName>
        <fullName>Jacalin-related lectin 2</fullName>
    </recommendedName>
</protein>
<keyword id="KW-0430">Lectin</keyword>
<keyword id="KW-1185">Reference proteome</keyword>
<accession>Q9MA49</accession>
<proteinExistence type="inferred from homology"/>
<name>JAL2_ARATH</name>
<sequence length="184" mass="20173">MEGKIKIGPVGTDYSGKKTMVDWDEGSHNGIISQIFLSHGPTGVFSIQFQFMLDDTFFLSSCHGQNTGSMFDVILLNCPHEYITGISGEYLKSDGASGPQIRSLAFATNLNQYGPFGGSSSQSSIWNHEQQFRFKLGKFRQFSGFYGTYNASGLQNIGVYLQPTIVKPTGTRNAEETESNIVLG</sequence>